<accession>B2V2J8</accession>
<organism>
    <name type="scientific">Clostridium botulinum (strain Alaska E43 / Type E3)</name>
    <dbReference type="NCBI Taxonomy" id="508767"/>
    <lineage>
        <taxon>Bacteria</taxon>
        <taxon>Bacillati</taxon>
        <taxon>Bacillota</taxon>
        <taxon>Clostridia</taxon>
        <taxon>Eubacteriales</taxon>
        <taxon>Clostridiaceae</taxon>
        <taxon>Clostridium</taxon>
    </lineage>
</organism>
<protein>
    <recommendedName>
        <fullName evidence="1">Endoribonuclease YbeY</fullName>
        <ecNumber evidence="1">3.1.-.-</ecNumber>
    </recommendedName>
</protein>
<sequence length="166" mass="19681">MIYVDNRQEKMEVSDEFTNHLEKVIEFALKEEDVNIPSEISLLFVDNEEIREINNETRNIDRATDVLSFPMLDYPEKKVFKEVYTENDFSEADFDGDDLVLGDIVLSLERALEQSKEYNHSYEREASYLVVHSVLHLLGYDHMEEDDKVKMRKREEEILTALDIRR</sequence>
<keyword id="KW-0963">Cytoplasm</keyword>
<keyword id="KW-0255">Endonuclease</keyword>
<keyword id="KW-0378">Hydrolase</keyword>
<keyword id="KW-0479">Metal-binding</keyword>
<keyword id="KW-0540">Nuclease</keyword>
<keyword id="KW-0690">Ribosome biogenesis</keyword>
<keyword id="KW-0698">rRNA processing</keyword>
<keyword id="KW-0862">Zinc</keyword>
<feature type="chain" id="PRO_1000089165" description="Endoribonuclease YbeY">
    <location>
        <begin position="1"/>
        <end position="166"/>
    </location>
</feature>
<feature type="binding site" evidence="1">
    <location>
        <position position="132"/>
    </location>
    <ligand>
        <name>Zn(2+)</name>
        <dbReference type="ChEBI" id="CHEBI:29105"/>
        <note>catalytic</note>
    </ligand>
</feature>
<feature type="binding site" evidence="1">
    <location>
        <position position="136"/>
    </location>
    <ligand>
        <name>Zn(2+)</name>
        <dbReference type="ChEBI" id="CHEBI:29105"/>
        <note>catalytic</note>
    </ligand>
</feature>
<feature type="binding site" evidence="1">
    <location>
        <position position="142"/>
    </location>
    <ligand>
        <name>Zn(2+)</name>
        <dbReference type="ChEBI" id="CHEBI:29105"/>
        <note>catalytic</note>
    </ligand>
</feature>
<gene>
    <name evidence="1" type="primary">ybeY</name>
    <name type="ordered locus">CLH_0871</name>
</gene>
<name>YBEY_CLOBA</name>
<evidence type="ECO:0000255" key="1">
    <source>
        <dbReference type="HAMAP-Rule" id="MF_00009"/>
    </source>
</evidence>
<dbReference type="EC" id="3.1.-.-" evidence="1"/>
<dbReference type="EMBL" id="CP001078">
    <property type="protein sequence ID" value="ACD51840.1"/>
    <property type="molecule type" value="Genomic_DNA"/>
</dbReference>
<dbReference type="RefSeq" id="WP_012450113.1">
    <property type="nucleotide sequence ID" value="NC_010723.1"/>
</dbReference>
<dbReference type="SMR" id="B2V2J8"/>
<dbReference type="KEGG" id="cbt:CLH_0871"/>
<dbReference type="HOGENOM" id="CLU_106710_3_0_9"/>
<dbReference type="GO" id="GO:0005737">
    <property type="term" value="C:cytoplasm"/>
    <property type="evidence" value="ECO:0007669"/>
    <property type="project" value="UniProtKB-SubCell"/>
</dbReference>
<dbReference type="GO" id="GO:0004222">
    <property type="term" value="F:metalloendopeptidase activity"/>
    <property type="evidence" value="ECO:0007669"/>
    <property type="project" value="InterPro"/>
</dbReference>
<dbReference type="GO" id="GO:0004521">
    <property type="term" value="F:RNA endonuclease activity"/>
    <property type="evidence" value="ECO:0007669"/>
    <property type="project" value="UniProtKB-UniRule"/>
</dbReference>
<dbReference type="GO" id="GO:0008270">
    <property type="term" value="F:zinc ion binding"/>
    <property type="evidence" value="ECO:0007669"/>
    <property type="project" value="UniProtKB-UniRule"/>
</dbReference>
<dbReference type="GO" id="GO:0006364">
    <property type="term" value="P:rRNA processing"/>
    <property type="evidence" value="ECO:0007669"/>
    <property type="project" value="UniProtKB-UniRule"/>
</dbReference>
<dbReference type="Gene3D" id="3.40.390.30">
    <property type="entry name" value="Metalloproteases ('zincins'), catalytic domain"/>
    <property type="match status" value="1"/>
</dbReference>
<dbReference type="HAMAP" id="MF_00009">
    <property type="entry name" value="Endoribonucl_YbeY"/>
    <property type="match status" value="1"/>
</dbReference>
<dbReference type="InterPro" id="IPR023091">
    <property type="entry name" value="MetalPrtase_cat_dom_sf_prd"/>
</dbReference>
<dbReference type="InterPro" id="IPR002036">
    <property type="entry name" value="YbeY"/>
</dbReference>
<dbReference type="InterPro" id="IPR020549">
    <property type="entry name" value="YbeY_CS"/>
</dbReference>
<dbReference type="NCBIfam" id="TIGR00043">
    <property type="entry name" value="rRNA maturation RNase YbeY"/>
    <property type="match status" value="1"/>
</dbReference>
<dbReference type="PANTHER" id="PTHR46986">
    <property type="entry name" value="ENDORIBONUCLEASE YBEY, CHLOROPLASTIC"/>
    <property type="match status" value="1"/>
</dbReference>
<dbReference type="PANTHER" id="PTHR46986:SF1">
    <property type="entry name" value="ENDORIBONUCLEASE YBEY, CHLOROPLASTIC"/>
    <property type="match status" value="1"/>
</dbReference>
<dbReference type="Pfam" id="PF02130">
    <property type="entry name" value="YbeY"/>
    <property type="match status" value="1"/>
</dbReference>
<dbReference type="SUPFAM" id="SSF55486">
    <property type="entry name" value="Metalloproteases ('zincins'), catalytic domain"/>
    <property type="match status" value="1"/>
</dbReference>
<dbReference type="PROSITE" id="PS01306">
    <property type="entry name" value="UPF0054"/>
    <property type="match status" value="1"/>
</dbReference>
<comment type="function">
    <text evidence="1">Single strand-specific metallo-endoribonuclease involved in late-stage 70S ribosome quality control and in maturation of the 3' terminus of the 16S rRNA.</text>
</comment>
<comment type="cofactor">
    <cofactor evidence="1">
        <name>Zn(2+)</name>
        <dbReference type="ChEBI" id="CHEBI:29105"/>
    </cofactor>
    <text evidence="1">Binds 1 zinc ion.</text>
</comment>
<comment type="subcellular location">
    <subcellularLocation>
        <location evidence="1">Cytoplasm</location>
    </subcellularLocation>
</comment>
<comment type="similarity">
    <text evidence="1">Belongs to the endoribonuclease YbeY family.</text>
</comment>
<proteinExistence type="inferred from homology"/>
<reference key="1">
    <citation type="submission" date="2008-05" db="EMBL/GenBank/DDBJ databases">
        <title>Complete genome sequence of Clostridium botulinum E3 str. Alaska E43.</title>
        <authorList>
            <person name="Brinkac L.M."/>
            <person name="Brown J.L."/>
            <person name="Bruce D."/>
            <person name="Detter C."/>
            <person name="Munk C."/>
            <person name="Smith L.A."/>
            <person name="Smith T.J."/>
            <person name="Sutton G."/>
            <person name="Brettin T.S."/>
        </authorList>
    </citation>
    <scope>NUCLEOTIDE SEQUENCE [LARGE SCALE GENOMIC DNA]</scope>
    <source>
        <strain>Alaska E43 / Type E3</strain>
    </source>
</reference>